<keyword id="KW-0997">Cell inner membrane</keyword>
<keyword id="KW-1003">Cell membrane</keyword>
<keyword id="KW-0472">Membrane</keyword>
<keyword id="KW-1185">Reference proteome</keyword>
<keyword id="KW-0762">Sugar transport</keyword>
<keyword id="KW-0812">Transmembrane</keyword>
<keyword id="KW-1133">Transmembrane helix</keyword>
<keyword id="KW-0813">Transport</keyword>
<protein>
    <recommendedName>
        <fullName evidence="1">Maltose/maltodextrin transport system permease protein MalF</fullName>
    </recommendedName>
</protein>
<organism>
    <name type="scientific">Photorhabdus laumondii subsp. laumondii (strain DSM 15139 / CIP 105565 / TT01)</name>
    <name type="common">Photorhabdus luminescens subsp. laumondii</name>
    <dbReference type="NCBI Taxonomy" id="243265"/>
    <lineage>
        <taxon>Bacteria</taxon>
        <taxon>Pseudomonadati</taxon>
        <taxon>Pseudomonadota</taxon>
        <taxon>Gammaproteobacteria</taxon>
        <taxon>Enterobacterales</taxon>
        <taxon>Morganellaceae</taxon>
        <taxon>Photorhabdus</taxon>
    </lineage>
</organism>
<sequence length="518" mass="57617">MSATLEKTSWWQHSALKWLAVSLCVLFTGYLVVLMYSQGEYLFAMVTLVLLGMGIYVFSNRNTYAWRYTYPGVAGMGLFVLFPLICTIAIAFTNYSSINQLTFERAQSVLMSRQYQSGQALTFKLYPKSDLWVLALSIPSQTKQLVSEPFSLSAMEETTLHVYEQDNLENGEAATLRIITQNRQALNQLVVVLPDGNRLKMSSLRQFSGVHPQYSLGEDGESLTDNQTGTLYRPNTDTGFYQSVNAEGTWGNETLTPGFTVTIGWKNFLRVIQDEGIQKPFLAIFVWTVVFSLFTVVLTVAVGMVLACIVQWEALKGRAVYRVLLILPYAVPSFISILIFKGLFNQSFGEINLLLNGLFGLKPAWFTDPTMARTMLIVVNAWLGYPYMMILCMGLLKAIPDDLYEASAMDGAGPFQNFFKITFPLLIKPLTPLMIASFAFNFNNFVLIQLLTLGGPDRIGTTTPAGYTDLLVSYTYRIAFDGSSGQDFGLAAAIATVIFLLVGALAVINLKATRIKFD</sequence>
<feature type="chain" id="PRO_0000060072" description="Maltose/maltodextrin transport system permease protein MalF">
    <location>
        <begin position="1"/>
        <end position="518"/>
    </location>
</feature>
<feature type="transmembrane region" description="Helical" evidence="2">
    <location>
        <begin position="15"/>
        <end position="35"/>
    </location>
</feature>
<feature type="transmembrane region" description="Helical" evidence="2">
    <location>
        <begin position="39"/>
        <end position="59"/>
    </location>
</feature>
<feature type="transmembrane region" description="Helical" evidence="2">
    <location>
        <begin position="72"/>
        <end position="92"/>
    </location>
</feature>
<feature type="transmembrane region" description="Helical" evidence="2">
    <location>
        <begin position="281"/>
        <end position="301"/>
    </location>
</feature>
<feature type="transmembrane region" description="Helical" evidence="2">
    <location>
        <begin position="324"/>
        <end position="344"/>
    </location>
</feature>
<feature type="transmembrane region" description="Helical" evidence="2">
    <location>
        <begin position="376"/>
        <end position="396"/>
    </location>
</feature>
<feature type="transmembrane region" description="Helical" evidence="2">
    <location>
        <begin position="488"/>
        <end position="508"/>
    </location>
</feature>
<feature type="domain" description="ABC transmembrane type-1" evidence="2">
    <location>
        <begin position="285"/>
        <end position="509"/>
    </location>
</feature>
<proteinExistence type="inferred from homology"/>
<gene>
    <name type="primary">malF</name>
    <name type="ordered locus">plu0459</name>
</gene>
<dbReference type="EMBL" id="BX571860">
    <property type="protein sequence ID" value="CAE12754.1"/>
    <property type="molecule type" value="Genomic_DNA"/>
</dbReference>
<dbReference type="RefSeq" id="WP_011144845.1">
    <property type="nucleotide sequence ID" value="NC_005126.1"/>
</dbReference>
<dbReference type="SMR" id="Q7N984"/>
<dbReference type="STRING" id="243265.plu0459"/>
<dbReference type="GeneID" id="48846744"/>
<dbReference type="KEGG" id="plu:plu0459"/>
<dbReference type="eggNOG" id="COG1175">
    <property type="taxonomic scope" value="Bacteria"/>
</dbReference>
<dbReference type="HOGENOM" id="CLU_016047_20_0_6"/>
<dbReference type="OrthoDB" id="9785347at2"/>
<dbReference type="Proteomes" id="UP000002514">
    <property type="component" value="Chromosome"/>
</dbReference>
<dbReference type="GO" id="GO:1990060">
    <property type="term" value="C:maltose transport complex"/>
    <property type="evidence" value="ECO:0007669"/>
    <property type="project" value="TreeGrafter"/>
</dbReference>
<dbReference type="GO" id="GO:0015423">
    <property type="term" value="F:ABC-type maltose transporter activity"/>
    <property type="evidence" value="ECO:0007669"/>
    <property type="project" value="TreeGrafter"/>
</dbReference>
<dbReference type="GO" id="GO:0042956">
    <property type="term" value="P:maltodextrin transmembrane transport"/>
    <property type="evidence" value="ECO:0007669"/>
    <property type="project" value="TreeGrafter"/>
</dbReference>
<dbReference type="CDD" id="cd06261">
    <property type="entry name" value="TM_PBP2"/>
    <property type="match status" value="1"/>
</dbReference>
<dbReference type="FunFam" id="1.10.3720.10:FF:000030">
    <property type="entry name" value="Maltose ABC transporter permease MalF"/>
    <property type="match status" value="1"/>
</dbReference>
<dbReference type="FunFam" id="1.20.58.370:FF:000001">
    <property type="entry name" value="Maltose ABC transporter permease MalF"/>
    <property type="match status" value="1"/>
</dbReference>
<dbReference type="Gene3D" id="2.40.430.10">
    <property type="entry name" value="D-maltodextrin-binding protein, MBP"/>
    <property type="match status" value="1"/>
</dbReference>
<dbReference type="Gene3D" id="1.20.58.370">
    <property type="entry name" value="MalF N-terminal region-like"/>
    <property type="match status" value="1"/>
</dbReference>
<dbReference type="Gene3D" id="3.10.650.10">
    <property type="entry name" value="MalF N-terminal region-like"/>
    <property type="match status" value="1"/>
</dbReference>
<dbReference type="Gene3D" id="1.10.3720.10">
    <property type="entry name" value="MetI-like"/>
    <property type="match status" value="1"/>
</dbReference>
<dbReference type="InterPro" id="IPR035277">
    <property type="entry name" value="MalF_N"/>
</dbReference>
<dbReference type="InterPro" id="IPR048464">
    <property type="entry name" value="MalF_N_TM"/>
</dbReference>
<dbReference type="InterPro" id="IPR029345">
    <property type="entry name" value="MalF_P2"/>
</dbReference>
<dbReference type="InterPro" id="IPR047103">
    <property type="entry name" value="MalF_P2_sf"/>
</dbReference>
<dbReference type="InterPro" id="IPR000515">
    <property type="entry name" value="MetI-like"/>
</dbReference>
<dbReference type="InterPro" id="IPR035906">
    <property type="entry name" value="MetI-like_sf"/>
</dbReference>
<dbReference type="NCBIfam" id="NF008232">
    <property type="entry name" value="PRK10999.1"/>
    <property type="match status" value="1"/>
</dbReference>
<dbReference type="PANTHER" id="PTHR47314">
    <property type="entry name" value="MALTOSE/MALTODEXTRIN TRANSPORT SYSTEM PERMEASE PROTEIN MALF"/>
    <property type="match status" value="1"/>
</dbReference>
<dbReference type="PANTHER" id="PTHR47314:SF1">
    <property type="entry name" value="MALTOSE_MALTODEXTRIN TRANSPORT SYSTEM PERMEASE PROTEIN MALF"/>
    <property type="match status" value="1"/>
</dbReference>
<dbReference type="Pfam" id="PF00528">
    <property type="entry name" value="BPD_transp_1"/>
    <property type="match status" value="1"/>
</dbReference>
<dbReference type="Pfam" id="PF20872">
    <property type="entry name" value="MalF_N_TM"/>
    <property type="match status" value="1"/>
</dbReference>
<dbReference type="Pfam" id="PF14785">
    <property type="entry name" value="MalF_P2"/>
    <property type="match status" value="1"/>
</dbReference>
<dbReference type="SUPFAM" id="SSF160964">
    <property type="entry name" value="MalF N-terminal region-like"/>
    <property type="match status" value="1"/>
</dbReference>
<dbReference type="SUPFAM" id="SSF161098">
    <property type="entry name" value="MetI-like"/>
    <property type="match status" value="1"/>
</dbReference>
<dbReference type="PROSITE" id="PS50928">
    <property type="entry name" value="ABC_TM1"/>
    <property type="match status" value="1"/>
</dbReference>
<reference key="1">
    <citation type="journal article" date="2003" name="Nat. Biotechnol.">
        <title>The genome sequence of the entomopathogenic bacterium Photorhabdus luminescens.</title>
        <authorList>
            <person name="Duchaud E."/>
            <person name="Rusniok C."/>
            <person name="Frangeul L."/>
            <person name="Buchrieser C."/>
            <person name="Givaudan A."/>
            <person name="Taourit S."/>
            <person name="Bocs S."/>
            <person name="Boursaux-Eude C."/>
            <person name="Chandler M."/>
            <person name="Charles J.-F."/>
            <person name="Dassa E."/>
            <person name="Derose R."/>
            <person name="Derzelle S."/>
            <person name="Freyssinet G."/>
            <person name="Gaudriault S."/>
            <person name="Medigue C."/>
            <person name="Lanois A."/>
            <person name="Powell K."/>
            <person name="Siguier P."/>
            <person name="Vincent R."/>
            <person name="Wingate V."/>
            <person name="Zouine M."/>
            <person name="Glaser P."/>
            <person name="Boemare N."/>
            <person name="Danchin A."/>
            <person name="Kunst F."/>
        </authorList>
    </citation>
    <scope>NUCLEOTIDE SEQUENCE [LARGE SCALE GENOMIC DNA]</scope>
    <source>
        <strain>DSM 15139 / CIP 105565 / TT01</strain>
    </source>
</reference>
<accession>Q7N984</accession>
<name>MALF_PHOLL</name>
<evidence type="ECO:0000250" key="1">
    <source>
        <dbReference type="UniProtKB" id="P02916"/>
    </source>
</evidence>
<evidence type="ECO:0000255" key="2">
    <source>
        <dbReference type="PROSITE-ProRule" id="PRU00441"/>
    </source>
</evidence>
<evidence type="ECO:0000305" key="3"/>
<comment type="function">
    <text evidence="1">Part of the ABC transporter complex MalEFGK involved in maltose/maltodextrin import. Probably responsible for the translocation of the substrate across the membrane.</text>
</comment>
<comment type="subunit">
    <text evidence="1">The complex is composed of two ATP-binding proteins (MalK), two transmembrane proteins (MalG and MalF) and a solute-binding protein (MalE).</text>
</comment>
<comment type="subcellular location">
    <subcellularLocation>
        <location evidence="1">Cell inner membrane</location>
        <topology evidence="1">Multi-pass membrane protein</topology>
    </subcellularLocation>
</comment>
<comment type="similarity">
    <text evidence="3">Belongs to the binding-protein-dependent transport system permease family. MalFG subfamily.</text>
</comment>